<feature type="chain" id="PRO_1000185691" description="tRNA U34 carboxymethyltransferase">
    <location>
        <begin position="1"/>
        <end position="291"/>
    </location>
</feature>
<feature type="binding site" evidence="1">
    <location>
        <position position="61"/>
    </location>
    <ligand>
        <name>carboxy-S-adenosyl-L-methionine</name>
        <dbReference type="ChEBI" id="CHEBI:134278"/>
    </ligand>
</feature>
<feature type="binding site" evidence="1">
    <location>
        <position position="75"/>
    </location>
    <ligand>
        <name>carboxy-S-adenosyl-L-methionine</name>
        <dbReference type="ChEBI" id="CHEBI:134278"/>
    </ligand>
</feature>
<feature type="binding site" evidence="1">
    <location>
        <position position="80"/>
    </location>
    <ligand>
        <name>carboxy-S-adenosyl-L-methionine</name>
        <dbReference type="ChEBI" id="CHEBI:134278"/>
    </ligand>
</feature>
<feature type="binding site" evidence="1">
    <location>
        <position position="100"/>
    </location>
    <ligand>
        <name>carboxy-S-adenosyl-L-methionine</name>
        <dbReference type="ChEBI" id="CHEBI:134278"/>
    </ligand>
</feature>
<feature type="binding site" evidence="1">
    <location>
        <begin position="122"/>
        <end position="124"/>
    </location>
    <ligand>
        <name>carboxy-S-adenosyl-L-methionine</name>
        <dbReference type="ChEBI" id="CHEBI:134278"/>
    </ligand>
</feature>
<feature type="binding site" evidence="1">
    <location>
        <position position="169"/>
    </location>
    <ligand>
        <name>carboxy-S-adenosyl-L-methionine</name>
        <dbReference type="ChEBI" id="CHEBI:134278"/>
    </ligand>
</feature>
<feature type="binding site" evidence="1">
    <location>
        <position position="284"/>
    </location>
    <ligand>
        <name>carboxy-S-adenosyl-L-methionine</name>
        <dbReference type="ChEBI" id="CHEBI:134278"/>
    </ligand>
</feature>
<protein>
    <recommendedName>
        <fullName evidence="1">tRNA U34 carboxymethyltransferase</fullName>
        <ecNumber evidence="1">2.5.1.-</ecNumber>
    </recommendedName>
</protein>
<evidence type="ECO:0000255" key="1">
    <source>
        <dbReference type="HAMAP-Rule" id="MF_01590"/>
    </source>
</evidence>
<name>CMOB_CAMLR</name>
<accession>B9KFR5</accession>
<gene>
    <name evidence="1" type="primary">cmoB</name>
    <name type="ordered locus">Cla_0566</name>
</gene>
<organism>
    <name type="scientific">Campylobacter lari (strain RM2100 / D67 / ATCC BAA-1060)</name>
    <dbReference type="NCBI Taxonomy" id="306263"/>
    <lineage>
        <taxon>Bacteria</taxon>
        <taxon>Pseudomonadati</taxon>
        <taxon>Campylobacterota</taxon>
        <taxon>Epsilonproteobacteria</taxon>
        <taxon>Campylobacterales</taxon>
        <taxon>Campylobacteraceae</taxon>
        <taxon>Campylobacter</taxon>
    </lineage>
</organism>
<dbReference type="EC" id="2.5.1.-" evidence="1"/>
<dbReference type="EMBL" id="CP000932">
    <property type="protein sequence ID" value="ACM63900.1"/>
    <property type="molecule type" value="Genomic_DNA"/>
</dbReference>
<dbReference type="RefSeq" id="WP_012661283.1">
    <property type="nucleotide sequence ID" value="NC_012039.1"/>
</dbReference>
<dbReference type="SMR" id="B9KFR5"/>
<dbReference type="STRING" id="306263.Cla_0566"/>
<dbReference type="KEGG" id="cla:CLA_0566"/>
<dbReference type="PATRIC" id="fig|306263.5.peg.550"/>
<dbReference type="eggNOG" id="COG0500">
    <property type="taxonomic scope" value="Bacteria"/>
</dbReference>
<dbReference type="HOGENOM" id="CLU_052665_1_0_7"/>
<dbReference type="Proteomes" id="UP000007727">
    <property type="component" value="Chromosome"/>
</dbReference>
<dbReference type="GO" id="GO:0016765">
    <property type="term" value="F:transferase activity, transferring alkyl or aryl (other than methyl) groups"/>
    <property type="evidence" value="ECO:0007669"/>
    <property type="project" value="InterPro"/>
</dbReference>
<dbReference type="GO" id="GO:0002098">
    <property type="term" value="P:tRNA wobble uridine modification"/>
    <property type="evidence" value="ECO:0007669"/>
    <property type="project" value="InterPro"/>
</dbReference>
<dbReference type="CDD" id="cd02440">
    <property type="entry name" value="AdoMet_MTases"/>
    <property type="match status" value="1"/>
</dbReference>
<dbReference type="Gene3D" id="3.40.50.150">
    <property type="entry name" value="Vaccinia Virus protein VP39"/>
    <property type="match status" value="1"/>
</dbReference>
<dbReference type="HAMAP" id="MF_01590">
    <property type="entry name" value="tRNA_carboxymethyltr_CmoB"/>
    <property type="match status" value="1"/>
</dbReference>
<dbReference type="InterPro" id="IPR010017">
    <property type="entry name" value="CmoB"/>
</dbReference>
<dbReference type="InterPro" id="IPR027555">
    <property type="entry name" value="Mo5U34_MeTrfas-like"/>
</dbReference>
<dbReference type="InterPro" id="IPR029063">
    <property type="entry name" value="SAM-dependent_MTases_sf"/>
</dbReference>
<dbReference type="NCBIfam" id="NF011650">
    <property type="entry name" value="PRK15068.1"/>
    <property type="match status" value="1"/>
</dbReference>
<dbReference type="NCBIfam" id="TIGR00452">
    <property type="entry name" value="tRNA 5-methoxyuridine(34)/uridine 5-oxyacetic acid(34) synthase CmoB"/>
    <property type="match status" value="1"/>
</dbReference>
<dbReference type="Pfam" id="PF08003">
    <property type="entry name" value="Methyltransf_9"/>
    <property type="match status" value="1"/>
</dbReference>
<dbReference type="SUPFAM" id="SSF53335">
    <property type="entry name" value="S-adenosyl-L-methionine-dependent methyltransferases"/>
    <property type="match status" value="1"/>
</dbReference>
<proteinExistence type="inferred from homology"/>
<sequence>MQDNALLKQALKHPLYEKIQKLNLKVQNSNYTIDDSFNIFCDEKLDEEIKNIALELKPWRKGPFKINKLFIDTEWQSFIKFNILKPYMQEIKGKVVADIGCNNGYYMFKMLEFNPSKLIGFDPSIKYFLQFFLLNSLAKTPIQYELLGVADVPNYGIKFDVIFCLGVIYHRSDPIAMLKQLKQSLNKDGVVFLDTMYIEDEREIALIPQKTYSKIPNIFFIPSILGLRNWCYRAGFSEFEVITTRQTDFEEQRKTQWIDSYSLDQFLDKNDSNLTCEGYEAPKRVYVKLKV</sequence>
<comment type="function">
    <text evidence="1">Catalyzes carboxymethyl transfer from carboxy-S-adenosyl-L-methionine (Cx-SAM) to 5-hydroxyuridine (ho5U) to form 5-carboxymethoxyuridine (cmo5U) at position 34 in tRNAs.</text>
</comment>
<comment type="catalytic activity">
    <reaction evidence="1">
        <text>carboxy-S-adenosyl-L-methionine + 5-hydroxyuridine(34) in tRNA = 5-carboxymethoxyuridine(34) in tRNA + S-adenosyl-L-homocysteine + H(+)</text>
        <dbReference type="Rhea" id="RHEA:52848"/>
        <dbReference type="Rhea" id="RHEA-COMP:13381"/>
        <dbReference type="Rhea" id="RHEA-COMP:13383"/>
        <dbReference type="ChEBI" id="CHEBI:15378"/>
        <dbReference type="ChEBI" id="CHEBI:57856"/>
        <dbReference type="ChEBI" id="CHEBI:134278"/>
        <dbReference type="ChEBI" id="CHEBI:136877"/>
        <dbReference type="ChEBI" id="CHEBI:136879"/>
    </reaction>
</comment>
<comment type="subunit">
    <text evidence="1">Homotetramer.</text>
</comment>
<comment type="similarity">
    <text evidence="1">Belongs to the class I-like SAM-binding methyltransferase superfamily. CmoB family.</text>
</comment>
<reference key="1">
    <citation type="journal article" date="2008" name="Foodborne Pathog. Dis.">
        <title>The complete genome sequence and analysis of the human pathogen Campylobacter lari.</title>
        <authorList>
            <person name="Miller W.G."/>
            <person name="Wang G."/>
            <person name="Binnewies T.T."/>
            <person name="Parker C.T."/>
        </authorList>
    </citation>
    <scope>NUCLEOTIDE SEQUENCE [LARGE SCALE GENOMIC DNA]</scope>
    <source>
        <strain>RM2100 / D67 / ATCC BAA-1060</strain>
    </source>
</reference>
<keyword id="KW-1185">Reference proteome</keyword>
<keyword id="KW-0808">Transferase</keyword>
<keyword id="KW-0819">tRNA processing</keyword>